<gene>
    <name evidence="1" type="primary">rbsD</name>
    <name type="ordered locus">PSEEN1957</name>
</gene>
<dbReference type="EC" id="5.4.99.62" evidence="1"/>
<dbReference type="EMBL" id="CT573326">
    <property type="protein sequence ID" value="CAK14792.1"/>
    <property type="molecule type" value="Genomic_DNA"/>
</dbReference>
<dbReference type="RefSeq" id="WP_011533200.1">
    <property type="nucleotide sequence ID" value="NC_008027.1"/>
</dbReference>
<dbReference type="SMR" id="Q1IC21"/>
<dbReference type="STRING" id="384676.PSEEN1957"/>
<dbReference type="GeneID" id="32805180"/>
<dbReference type="KEGG" id="pen:PSEEN1957"/>
<dbReference type="eggNOG" id="COG1869">
    <property type="taxonomic scope" value="Bacteria"/>
</dbReference>
<dbReference type="HOGENOM" id="CLU_135498_0_0_6"/>
<dbReference type="OrthoDB" id="9805009at2"/>
<dbReference type="UniPathway" id="UPA00916">
    <property type="reaction ID" value="UER00888"/>
</dbReference>
<dbReference type="Proteomes" id="UP000000658">
    <property type="component" value="Chromosome"/>
</dbReference>
<dbReference type="GO" id="GO:0005829">
    <property type="term" value="C:cytosol"/>
    <property type="evidence" value="ECO:0007669"/>
    <property type="project" value="TreeGrafter"/>
</dbReference>
<dbReference type="GO" id="GO:0062193">
    <property type="term" value="F:D-ribose pyranase activity"/>
    <property type="evidence" value="ECO:0007669"/>
    <property type="project" value="UniProtKB-EC"/>
</dbReference>
<dbReference type="GO" id="GO:0016872">
    <property type="term" value="F:intramolecular lyase activity"/>
    <property type="evidence" value="ECO:0007669"/>
    <property type="project" value="UniProtKB-UniRule"/>
</dbReference>
<dbReference type="GO" id="GO:0048029">
    <property type="term" value="F:monosaccharide binding"/>
    <property type="evidence" value="ECO:0007669"/>
    <property type="project" value="InterPro"/>
</dbReference>
<dbReference type="GO" id="GO:0019303">
    <property type="term" value="P:D-ribose catabolic process"/>
    <property type="evidence" value="ECO:0007669"/>
    <property type="project" value="UniProtKB-UniRule"/>
</dbReference>
<dbReference type="Gene3D" id="3.40.1650.10">
    <property type="entry name" value="RbsD-like domain"/>
    <property type="match status" value="1"/>
</dbReference>
<dbReference type="HAMAP" id="MF_01661">
    <property type="entry name" value="D_rib_pyranase"/>
    <property type="match status" value="1"/>
</dbReference>
<dbReference type="InterPro" id="IPR023064">
    <property type="entry name" value="D-ribose_pyranase"/>
</dbReference>
<dbReference type="InterPro" id="IPR023750">
    <property type="entry name" value="RbsD-like_sf"/>
</dbReference>
<dbReference type="InterPro" id="IPR007721">
    <property type="entry name" value="RbsD_FucU"/>
</dbReference>
<dbReference type="NCBIfam" id="NF008761">
    <property type="entry name" value="PRK11797.1"/>
    <property type="match status" value="1"/>
</dbReference>
<dbReference type="PANTHER" id="PTHR37831">
    <property type="entry name" value="D-RIBOSE PYRANASE"/>
    <property type="match status" value="1"/>
</dbReference>
<dbReference type="PANTHER" id="PTHR37831:SF1">
    <property type="entry name" value="D-RIBOSE PYRANASE"/>
    <property type="match status" value="1"/>
</dbReference>
<dbReference type="Pfam" id="PF05025">
    <property type="entry name" value="RbsD_FucU"/>
    <property type="match status" value="1"/>
</dbReference>
<dbReference type="SUPFAM" id="SSF102546">
    <property type="entry name" value="RbsD-like"/>
    <property type="match status" value="1"/>
</dbReference>
<reference key="1">
    <citation type="journal article" date="2006" name="Nat. Biotechnol.">
        <title>Complete genome sequence of the entomopathogenic and metabolically versatile soil bacterium Pseudomonas entomophila.</title>
        <authorList>
            <person name="Vodovar N."/>
            <person name="Vallenet D."/>
            <person name="Cruveiller S."/>
            <person name="Rouy Z."/>
            <person name="Barbe V."/>
            <person name="Acosta C."/>
            <person name="Cattolico L."/>
            <person name="Jubin C."/>
            <person name="Lajus A."/>
            <person name="Segurens B."/>
            <person name="Vacherie B."/>
            <person name="Wincker P."/>
            <person name="Weissenbach J."/>
            <person name="Lemaitre B."/>
            <person name="Medigue C."/>
            <person name="Boccard F."/>
        </authorList>
    </citation>
    <scope>NUCLEOTIDE SEQUENCE [LARGE SCALE GENOMIC DNA]</scope>
    <source>
        <strain>L48</strain>
    </source>
</reference>
<feature type="chain" id="PRO_0000346234" description="D-ribose pyranase">
    <location>
        <begin position="1"/>
        <end position="134"/>
    </location>
</feature>
<feature type="active site" description="Proton donor" evidence="1">
    <location>
        <position position="20"/>
    </location>
</feature>
<feature type="binding site" evidence="1">
    <location>
        <position position="28"/>
    </location>
    <ligand>
        <name>substrate</name>
    </ligand>
</feature>
<feature type="binding site" evidence="1">
    <location>
        <position position="101"/>
    </location>
    <ligand>
        <name>substrate</name>
    </ligand>
</feature>
<feature type="binding site" evidence="1">
    <location>
        <begin position="123"/>
        <end position="125"/>
    </location>
    <ligand>
        <name>substrate</name>
    </ligand>
</feature>
<organism>
    <name type="scientific">Pseudomonas entomophila (strain L48)</name>
    <dbReference type="NCBI Taxonomy" id="384676"/>
    <lineage>
        <taxon>Bacteria</taxon>
        <taxon>Pseudomonadati</taxon>
        <taxon>Pseudomonadota</taxon>
        <taxon>Gammaproteobacteria</taxon>
        <taxon>Pseudomonadales</taxon>
        <taxon>Pseudomonadaceae</taxon>
        <taxon>Pseudomonas</taxon>
    </lineage>
</organism>
<proteinExistence type="inferred from homology"/>
<name>RBSD_PSEE4</name>
<protein>
    <recommendedName>
        <fullName evidence="1">D-ribose pyranase</fullName>
        <ecNumber evidence="1">5.4.99.62</ecNumber>
    </recommendedName>
</protein>
<accession>Q1IC21</accession>
<sequence>MKKTPLLNIALSRTIAGLGHGDILVIGDAGLPVPPGVELIDLALTPGIPDFTSVLRVVLSEMQVERHVLAEEMFQAAPLGLIEVEQMHARGEIGQREVMNHADFKALTRQARAVIRTGECRPYSNIALVAGVTF</sequence>
<keyword id="KW-0119">Carbohydrate metabolism</keyword>
<keyword id="KW-0963">Cytoplasm</keyword>
<keyword id="KW-0413">Isomerase</keyword>
<evidence type="ECO:0000255" key="1">
    <source>
        <dbReference type="HAMAP-Rule" id="MF_01661"/>
    </source>
</evidence>
<comment type="function">
    <text evidence="1">Catalyzes the interconversion of beta-pyran and beta-furan forms of D-ribose.</text>
</comment>
<comment type="catalytic activity">
    <reaction evidence="1">
        <text>beta-D-ribopyranose = beta-D-ribofuranose</text>
        <dbReference type="Rhea" id="RHEA:25432"/>
        <dbReference type="ChEBI" id="CHEBI:27476"/>
        <dbReference type="ChEBI" id="CHEBI:47002"/>
        <dbReference type="EC" id="5.4.99.62"/>
    </reaction>
</comment>
<comment type="pathway">
    <text evidence="1">Carbohydrate metabolism; D-ribose degradation; D-ribose 5-phosphate from beta-D-ribopyranose: step 1/2.</text>
</comment>
<comment type="subunit">
    <text evidence="1">Homodecamer.</text>
</comment>
<comment type="subcellular location">
    <subcellularLocation>
        <location evidence="1">Cytoplasm</location>
    </subcellularLocation>
</comment>
<comment type="similarity">
    <text evidence="1">Belongs to the RbsD / FucU family. RbsD subfamily.</text>
</comment>